<evidence type="ECO:0000250" key="1">
    <source>
        <dbReference type="UniProtKB" id="P00150"/>
    </source>
</evidence>
<reference key="1">
    <citation type="book" date="1980" name="Protides of the biological fluids, Proc. 28th colloquium">
        <title>Cytochromes c of two different sequence classes in Agrobacterium tumefaciens.</title>
        <editorList>
            <person name="Peeters H."/>
        </editorList>
        <authorList>
            <person name="van Beeumen J."/>
            <person name="Tempst P."/>
            <person name="Stevens P."/>
            <person name="Bral D."/>
            <person name="van Damme J."/>
            <person name="de Ley J."/>
        </authorList>
    </citation>
    <scope>PROTEIN SEQUENCE</scope>
</reference>
<keyword id="KW-0903">Direct protein sequencing</keyword>
<keyword id="KW-0249">Electron transport</keyword>
<keyword id="KW-0349">Heme</keyword>
<keyword id="KW-0408">Iron</keyword>
<keyword id="KW-0479">Metal-binding</keyword>
<keyword id="KW-0813">Transport</keyword>
<protein>
    <recommendedName>
        <fullName>Cytochrome c-556</fullName>
    </recommendedName>
    <alternativeName>
        <fullName>Cytochrome c556</fullName>
    </alternativeName>
</protein>
<proteinExistence type="evidence at protein level"/>
<name>C556_AGRTC</name>
<sequence length="122" mass="12519">AGEVEKREGMMKQIGGSMGALAAISKGQKPYDAEAVKAAVTTISTNAKAFPDQFPPGSETGSAAAPAIWENFDDFKSKAAKLGADADKVLASLPADQAGVTAAMQTLGADCGACHQTYRLKK</sequence>
<accession>P00140</accession>
<dbReference type="PIR" id="A00133">
    <property type="entry name" value="CCAGC6"/>
</dbReference>
<dbReference type="SMR" id="P00140"/>
<dbReference type="GO" id="GO:0042597">
    <property type="term" value="C:periplasmic space"/>
    <property type="evidence" value="ECO:0007669"/>
    <property type="project" value="InterPro"/>
</dbReference>
<dbReference type="GO" id="GO:0009055">
    <property type="term" value="F:electron transfer activity"/>
    <property type="evidence" value="ECO:0007669"/>
    <property type="project" value="InterPro"/>
</dbReference>
<dbReference type="GO" id="GO:0020037">
    <property type="term" value="F:heme binding"/>
    <property type="evidence" value="ECO:0007669"/>
    <property type="project" value="InterPro"/>
</dbReference>
<dbReference type="GO" id="GO:0005506">
    <property type="term" value="F:iron ion binding"/>
    <property type="evidence" value="ECO:0007669"/>
    <property type="project" value="InterPro"/>
</dbReference>
<dbReference type="GO" id="GO:0022900">
    <property type="term" value="P:electron transport chain"/>
    <property type="evidence" value="ECO:0007669"/>
    <property type="project" value="InterPro"/>
</dbReference>
<dbReference type="Gene3D" id="1.20.120.10">
    <property type="entry name" value="Cytochrome c/b562"/>
    <property type="match status" value="1"/>
</dbReference>
<dbReference type="InterPro" id="IPR010980">
    <property type="entry name" value="Cyt_c/b562"/>
</dbReference>
<dbReference type="InterPro" id="IPR002321">
    <property type="entry name" value="Cyt_c_II"/>
</dbReference>
<dbReference type="InterPro" id="IPR012127">
    <property type="entry name" value="Cyt_c_prime"/>
</dbReference>
<dbReference type="InterPro" id="IPR015984">
    <property type="entry name" value="Cyt_c_prime_subgr"/>
</dbReference>
<dbReference type="Pfam" id="PF01322">
    <property type="entry name" value="Cytochrom_C_2"/>
    <property type="match status" value="1"/>
</dbReference>
<dbReference type="PIRSF" id="PIRSF000027">
    <property type="entry name" value="Cytc_c_prime"/>
    <property type="match status" value="1"/>
</dbReference>
<dbReference type="PRINTS" id="PR00608">
    <property type="entry name" value="CYTCHROMECII"/>
</dbReference>
<dbReference type="SUPFAM" id="SSF47175">
    <property type="entry name" value="Cytochromes"/>
    <property type="match status" value="1"/>
</dbReference>
<dbReference type="PROSITE" id="PS51009">
    <property type="entry name" value="CYTCII"/>
    <property type="match status" value="1"/>
</dbReference>
<comment type="function">
    <text>Low-spin monoheme cytochrome c.</text>
</comment>
<comment type="subunit">
    <text>Monomer.</text>
</comment>
<comment type="PTM">
    <text evidence="1">Binds 1 heme c group covalently per subunit.</text>
</comment>
<organism>
    <name type="scientific">Agrobacterium tumefaciens (strain II Chrys)</name>
    <dbReference type="NCBI Taxonomy" id="372"/>
    <lineage>
        <taxon>Bacteria</taxon>
        <taxon>Pseudomonadati</taxon>
        <taxon>Pseudomonadota</taxon>
        <taxon>Alphaproteobacteria</taxon>
        <taxon>Hyphomicrobiales</taxon>
        <taxon>Rhizobiaceae</taxon>
        <taxon>Rhizobium/Agrobacterium group</taxon>
        <taxon>Agrobacterium</taxon>
        <taxon>Agrobacterium tumefaciens complex</taxon>
    </lineage>
</organism>
<feature type="chain" id="PRO_0000108412" description="Cytochrome c-556">
    <location>
        <begin position="1"/>
        <end position="122"/>
    </location>
</feature>
<feature type="binding site" description="axial binding residue">
    <location>
        <position position="11"/>
    </location>
    <ligand>
        <name>heme</name>
        <dbReference type="ChEBI" id="CHEBI:30413"/>
    </ligand>
    <ligandPart>
        <name>Fe</name>
        <dbReference type="ChEBI" id="CHEBI:18248"/>
    </ligandPart>
</feature>
<feature type="binding site" description="axial binding residue" evidence="1">
    <location>
        <position position="11"/>
    </location>
    <ligand>
        <name>heme c</name>
        <dbReference type="ChEBI" id="CHEBI:61717"/>
    </ligand>
    <ligandPart>
        <name>Fe</name>
        <dbReference type="ChEBI" id="CHEBI:18248"/>
    </ligandPart>
</feature>
<feature type="binding site" description="covalent">
    <location>
        <position position="111"/>
    </location>
    <ligand>
        <name>heme</name>
        <dbReference type="ChEBI" id="CHEBI:30413"/>
    </ligand>
</feature>
<feature type="binding site" description="covalent" evidence="1">
    <location>
        <position position="111"/>
    </location>
    <ligand>
        <name>heme c</name>
        <dbReference type="ChEBI" id="CHEBI:61717"/>
    </ligand>
</feature>
<feature type="binding site" description="covalent">
    <location>
        <position position="114"/>
    </location>
    <ligand>
        <name>heme</name>
        <dbReference type="ChEBI" id="CHEBI:30413"/>
    </ligand>
</feature>
<feature type="binding site" description="covalent" evidence="1">
    <location>
        <position position="114"/>
    </location>
    <ligand>
        <name>heme c</name>
        <dbReference type="ChEBI" id="CHEBI:61717"/>
    </ligand>
</feature>
<feature type="binding site" description="axial binding residue">
    <location>
        <position position="115"/>
    </location>
    <ligand>
        <name>heme</name>
        <dbReference type="ChEBI" id="CHEBI:30413"/>
    </ligand>
    <ligandPart>
        <name>Fe</name>
        <dbReference type="ChEBI" id="CHEBI:18248"/>
    </ligandPart>
</feature>
<feature type="binding site" description="axial binding residue" evidence="1">
    <location>
        <position position="115"/>
    </location>
    <ligand>
        <name>heme c</name>
        <dbReference type="ChEBI" id="CHEBI:61717"/>
    </ligand>
    <ligandPart>
        <name>Fe</name>
        <dbReference type="ChEBI" id="CHEBI:18248"/>
    </ligandPart>
</feature>